<proteinExistence type="inferred from homology"/>
<name>PURA_SALSV</name>
<feature type="chain" id="PRO_1000089339" description="Adenylosuccinate synthetase">
    <location>
        <begin position="1"/>
        <end position="432"/>
    </location>
</feature>
<feature type="active site" description="Proton acceptor" evidence="1">
    <location>
        <position position="14"/>
    </location>
</feature>
<feature type="active site" description="Proton donor" evidence="1">
    <location>
        <position position="42"/>
    </location>
</feature>
<feature type="binding site" evidence="1">
    <location>
        <begin position="13"/>
        <end position="19"/>
    </location>
    <ligand>
        <name>GTP</name>
        <dbReference type="ChEBI" id="CHEBI:37565"/>
    </ligand>
</feature>
<feature type="binding site" description="in other chain" evidence="1">
    <location>
        <begin position="14"/>
        <end position="17"/>
    </location>
    <ligand>
        <name>IMP</name>
        <dbReference type="ChEBI" id="CHEBI:58053"/>
        <note>ligand shared between dimeric partners</note>
    </ligand>
</feature>
<feature type="binding site" evidence="1">
    <location>
        <position position="14"/>
    </location>
    <ligand>
        <name>Mg(2+)</name>
        <dbReference type="ChEBI" id="CHEBI:18420"/>
    </ligand>
</feature>
<feature type="binding site" description="in other chain" evidence="1">
    <location>
        <begin position="39"/>
        <end position="42"/>
    </location>
    <ligand>
        <name>IMP</name>
        <dbReference type="ChEBI" id="CHEBI:58053"/>
        <note>ligand shared between dimeric partners</note>
    </ligand>
</feature>
<feature type="binding site" evidence="1">
    <location>
        <begin position="41"/>
        <end position="43"/>
    </location>
    <ligand>
        <name>GTP</name>
        <dbReference type="ChEBI" id="CHEBI:37565"/>
    </ligand>
</feature>
<feature type="binding site" evidence="1">
    <location>
        <position position="41"/>
    </location>
    <ligand>
        <name>Mg(2+)</name>
        <dbReference type="ChEBI" id="CHEBI:18420"/>
    </ligand>
</feature>
<feature type="binding site" description="in other chain" evidence="1">
    <location>
        <position position="130"/>
    </location>
    <ligand>
        <name>IMP</name>
        <dbReference type="ChEBI" id="CHEBI:58053"/>
        <note>ligand shared between dimeric partners</note>
    </ligand>
</feature>
<feature type="binding site" evidence="1">
    <location>
        <position position="144"/>
    </location>
    <ligand>
        <name>IMP</name>
        <dbReference type="ChEBI" id="CHEBI:58053"/>
        <note>ligand shared between dimeric partners</note>
    </ligand>
</feature>
<feature type="binding site" description="in other chain" evidence="1">
    <location>
        <position position="225"/>
    </location>
    <ligand>
        <name>IMP</name>
        <dbReference type="ChEBI" id="CHEBI:58053"/>
        <note>ligand shared between dimeric partners</note>
    </ligand>
</feature>
<feature type="binding site" description="in other chain" evidence="1">
    <location>
        <position position="240"/>
    </location>
    <ligand>
        <name>IMP</name>
        <dbReference type="ChEBI" id="CHEBI:58053"/>
        <note>ligand shared between dimeric partners</note>
    </ligand>
</feature>
<feature type="binding site" evidence="1">
    <location>
        <begin position="300"/>
        <end position="306"/>
    </location>
    <ligand>
        <name>substrate</name>
    </ligand>
</feature>
<feature type="binding site" description="in other chain" evidence="1">
    <location>
        <position position="304"/>
    </location>
    <ligand>
        <name>IMP</name>
        <dbReference type="ChEBI" id="CHEBI:58053"/>
        <note>ligand shared between dimeric partners</note>
    </ligand>
</feature>
<feature type="binding site" evidence="1">
    <location>
        <position position="306"/>
    </location>
    <ligand>
        <name>GTP</name>
        <dbReference type="ChEBI" id="CHEBI:37565"/>
    </ligand>
</feature>
<feature type="binding site" evidence="1">
    <location>
        <begin position="332"/>
        <end position="334"/>
    </location>
    <ligand>
        <name>GTP</name>
        <dbReference type="ChEBI" id="CHEBI:37565"/>
    </ligand>
</feature>
<feature type="binding site" evidence="1">
    <location>
        <begin position="415"/>
        <end position="417"/>
    </location>
    <ligand>
        <name>GTP</name>
        <dbReference type="ChEBI" id="CHEBI:37565"/>
    </ligand>
</feature>
<keyword id="KW-0963">Cytoplasm</keyword>
<keyword id="KW-0342">GTP-binding</keyword>
<keyword id="KW-0436">Ligase</keyword>
<keyword id="KW-0460">Magnesium</keyword>
<keyword id="KW-0479">Metal-binding</keyword>
<keyword id="KW-0547">Nucleotide-binding</keyword>
<keyword id="KW-0658">Purine biosynthesis</keyword>
<accession>B4TSF7</accession>
<reference key="1">
    <citation type="journal article" date="2011" name="J. Bacteriol.">
        <title>Comparative genomics of 28 Salmonella enterica isolates: evidence for CRISPR-mediated adaptive sublineage evolution.</title>
        <authorList>
            <person name="Fricke W.F."/>
            <person name="Mammel M.K."/>
            <person name="McDermott P.F."/>
            <person name="Tartera C."/>
            <person name="White D.G."/>
            <person name="Leclerc J.E."/>
            <person name="Ravel J."/>
            <person name="Cebula T.A."/>
        </authorList>
    </citation>
    <scope>NUCLEOTIDE SEQUENCE [LARGE SCALE GENOMIC DNA]</scope>
    <source>
        <strain>CVM19633</strain>
    </source>
</reference>
<gene>
    <name evidence="1" type="primary">purA</name>
    <name type="ordered locus">SeSA_A4634</name>
</gene>
<dbReference type="EC" id="6.3.4.4" evidence="1"/>
<dbReference type="EMBL" id="CP001127">
    <property type="protein sequence ID" value="ACF91492.1"/>
    <property type="molecule type" value="Genomic_DNA"/>
</dbReference>
<dbReference type="RefSeq" id="WP_000527976.1">
    <property type="nucleotide sequence ID" value="NC_011094.1"/>
</dbReference>
<dbReference type="SMR" id="B4TSF7"/>
<dbReference type="KEGG" id="sew:SeSA_A4634"/>
<dbReference type="HOGENOM" id="CLU_029848_0_0_6"/>
<dbReference type="UniPathway" id="UPA00075">
    <property type="reaction ID" value="UER00335"/>
</dbReference>
<dbReference type="Proteomes" id="UP000001865">
    <property type="component" value="Chromosome"/>
</dbReference>
<dbReference type="GO" id="GO:0005737">
    <property type="term" value="C:cytoplasm"/>
    <property type="evidence" value="ECO:0007669"/>
    <property type="project" value="UniProtKB-SubCell"/>
</dbReference>
<dbReference type="GO" id="GO:0004019">
    <property type="term" value="F:adenylosuccinate synthase activity"/>
    <property type="evidence" value="ECO:0007669"/>
    <property type="project" value="UniProtKB-UniRule"/>
</dbReference>
<dbReference type="GO" id="GO:0005525">
    <property type="term" value="F:GTP binding"/>
    <property type="evidence" value="ECO:0007669"/>
    <property type="project" value="UniProtKB-UniRule"/>
</dbReference>
<dbReference type="GO" id="GO:0000287">
    <property type="term" value="F:magnesium ion binding"/>
    <property type="evidence" value="ECO:0007669"/>
    <property type="project" value="UniProtKB-UniRule"/>
</dbReference>
<dbReference type="GO" id="GO:0044208">
    <property type="term" value="P:'de novo' AMP biosynthetic process"/>
    <property type="evidence" value="ECO:0007669"/>
    <property type="project" value="UniProtKB-UniRule"/>
</dbReference>
<dbReference type="GO" id="GO:0046040">
    <property type="term" value="P:IMP metabolic process"/>
    <property type="evidence" value="ECO:0007669"/>
    <property type="project" value="TreeGrafter"/>
</dbReference>
<dbReference type="CDD" id="cd03108">
    <property type="entry name" value="AdSS"/>
    <property type="match status" value="1"/>
</dbReference>
<dbReference type="FunFam" id="1.10.300.10:FF:000001">
    <property type="entry name" value="Adenylosuccinate synthetase"/>
    <property type="match status" value="1"/>
</dbReference>
<dbReference type="FunFam" id="3.90.170.10:FF:000001">
    <property type="entry name" value="Adenylosuccinate synthetase"/>
    <property type="match status" value="1"/>
</dbReference>
<dbReference type="Gene3D" id="3.40.440.10">
    <property type="entry name" value="Adenylosuccinate Synthetase, subunit A, domain 1"/>
    <property type="match status" value="1"/>
</dbReference>
<dbReference type="Gene3D" id="1.10.300.10">
    <property type="entry name" value="Adenylosuccinate Synthetase, subunit A, domain 2"/>
    <property type="match status" value="1"/>
</dbReference>
<dbReference type="Gene3D" id="3.90.170.10">
    <property type="entry name" value="Adenylosuccinate Synthetase, subunit A, domain 3"/>
    <property type="match status" value="1"/>
</dbReference>
<dbReference type="HAMAP" id="MF_00011">
    <property type="entry name" value="Adenylosucc_synth"/>
    <property type="match status" value="1"/>
</dbReference>
<dbReference type="InterPro" id="IPR018220">
    <property type="entry name" value="Adenylosuccin_syn_GTP-bd"/>
</dbReference>
<dbReference type="InterPro" id="IPR033128">
    <property type="entry name" value="Adenylosuccin_syn_Lys_AS"/>
</dbReference>
<dbReference type="InterPro" id="IPR042109">
    <property type="entry name" value="Adenylosuccinate_synth_dom1"/>
</dbReference>
<dbReference type="InterPro" id="IPR042110">
    <property type="entry name" value="Adenylosuccinate_synth_dom2"/>
</dbReference>
<dbReference type="InterPro" id="IPR042111">
    <property type="entry name" value="Adenylosuccinate_synth_dom3"/>
</dbReference>
<dbReference type="InterPro" id="IPR001114">
    <property type="entry name" value="Adenylosuccinate_synthetase"/>
</dbReference>
<dbReference type="InterPro" id="IPR027417">
    <property type="entry name" value="P-loop_NTPase"/>
</dbReference>
<dbReference type="NCBIfam" id="NF002223">
    <property type="entry name" value="PRK01117.1"/>
    <property type="match status" value="1"/>
</dbReference>
<dbReference type="NCBIfam" id="TIGR00184">
    <property type="entry name" value="purA"/>
    <property type="match status" value="1"/>
</dbReference>
<dbReference type="PANTHER" id="PTHR11846">
    <property type="entry name" value="ADENYLOSUCCINATE SYNTHETASE"/>
    <property type="match status" value="1"/>
</dbReference>
<dbReference type="PANTHER" id="PTHR11846:SF0">
    <property type="entry name" value="ADENYLOSUCCINATE SYNTHETASE"/>
    <property type="match status" value="1"/>
</dbReference>
<dbReference type="Pfam" id="PF00709">
    <property type="entry name" value="Adenylsucc_synt"/>
    <property type="match status" value="1"/>
</dbReference>
<dbReference type="SMART" id="SM00788">
    <property type="entry name" value="Adenylsucc_synt"/>
    <property type="match status" value="1"/>
</dbReference>
<dbReference type="SUPFAM" id="SSF52540">
    <property type="entry name" value="P-loop containing nucleoside triphosphate hydrolases"/>
    <property type="match status" value="1"/>
</dbReference>
<dbReference type="PROSITE" id="PS01266">
    <property type="entry name" value="ADENYLOSUCCIN_SYN_1"/>
    <property type="match status" value="1"/>
</dbReference>
<dbReference type="PROSITE" id="PS00513">
    <property type="entry name" value="ADENYLOSUCCIN_SYN_2"/>
    <property type="match status" value="1"/>
</dbReference>
<evidence type="ECO:0000255" key="1">
    <source>
        <dbReference type="HAMAP-Rule" id="MF_00011"/>
    </source>
</evidence>
<organism>
    <name type="scientific">Salmonella schwarzengrund (strain CVM19633)</name>
    <dbReference type="NCBI Taxonomy" id="439843"/>
    <lineage>
        <taxon>Bacteria</taxon>
        <taxon>Pseudomonadati</taxon>
        <taxon>Pseudomonadota</taxon>
        <taxon>Gammaproteobacteria</taxon>
        <taxon>Enterobacterales</taxon>
        <taxon>Enterobacteriaceae</taxon>
        <taxon>Salmonella</taxon>
    </lineage>
</organism>
<protein>
    <recommendedName>
        <fullName evidence="1">Adenylosuccinate synthetase</fullName>
        <shortName evidence="1">AMPSase</shortName>
        <shortName evidence="1">AdSS</shortName>
        <ecNumber evidence="1">6.3.4.4</ecNumber>
    </recommendedName>
    <alternativeName>
        <fullName evidence="1">IMP--aspartate ligase</fullName>
    </alternativeName>
</protein>
<sequence>MGNNVVVLGTQWGDEGKGKIVDLLTERAKYVVRYQGGHNAGHTLVINGEKTVLHLIPSGILRENVTSIIGNGVVLSPSALMKEMKELEDRGIPVRERLLLSEACPLILDYHVALDNAREKARGAKAIGTTGRGIGPAYEDKVARRGLRVGDLFDKETFAEKLKEVMEYHNFQLVNYYKVEAVDYQKVLDDTMAVADILTSMVVDVSDLLDQARQRGDFVMFEGAQGTLLDIDHGTYPYVTSSNTTAGGVATGSGLGPRYVDYVLGILKAYSTRVGAGPFPTELFDETGEFLCKQGNEYGATTGRRRRTGWLDTVAVRRAVQLNSLSGFCLTKLDVLDGLKEVKLCVAYRMPDGREVTTTPLAADDWKGVEPIYETMPGWSESTFGVKDRSGLPQAALNYIKRIEELTGVPIDIISTGPDRTETMILRDPFDA</sequence>
<comment type="function">
    <text evidence="1">Plays an important role in the de novo pathway of purine nucleotide biosynthesis. Catalyzes the first committed step in the biosynthesis of AMP from IMP.</text>
</comment>
<comment type="catalytic activity">
    <reaction evidence="1">
        <text>IMP + L-aspartate + GTP = N(6)-(1,2-dicarboxyethyl)-AMP + GDP + phosphate + 2 H(+)</text>
        <dbReference type="Rhea" id="RHEA:15753"/>
        <dbReference type="ChEBI" id="CHEBI:15378"/>
        <dbReference type="ChEBI" id="CHEBI:29991"/>
        <dbReference type="ChEBI" id="CHEBI:37565"/>
        <dbReference type="ChEBI" id="CHEBI:43474"/>
        <dbReference type="ChEBI" id="CHEBI:57567"/>
        <dbReference type="ChEBI" id="CHEBI:58053"/>
        <dbReference type="ChEBI" id="CHEBI:58189"/>
        <dbReference type="EC" id="6.3.4.4"/>
    </reaction>
</comment>
<comment type="cofactor">
    <cofactor evidence="1">
        <name>Mg(2+)</name>
        <dbReference type="ChEBI" id="CHEBI:18420"/>
    </cofactor>
    <text evidence="1">Binds 1 Mg(2+) ion per subunit.</text>
</comment>
<comment type="pathway">
    <text evidence="1">Purine metabolism; AMP biosynthesis via de novo pathway; AMP from IMP: step 1/2.</text>
</comment>
<comment type="subunit">
    <text evidence="1">Homodimer.</text>
</comment>
<comment type="subcellular location">
    <subcellularLocation>
        <location evidence="1">Cytoplasm</location>
    </subcellularLocation>
</comment>
<comment type="similarity">
    <text evidence="1">Belongs to the adenylosuccinate synthetase family.</text>
</comment>